<organism>
    <name type="scientific">Oryza sativa subsp. japonica</name>
    <name type="common">Rice</name>
    <dbReference type="NCBI Taxonomy" id="39947"/>
    <lineage>
        <taxon>Eukaryota</taxon>
        <taxon>Viridiplantae</taxon>
        <taxon>Streptophyta</taxon>
        <taxon>Embryophyta</taxon>
        <taxon>Tracheophyta</taxon>
        <taxon>Spermatophyta</taxon>
        <taxon>Magnoliopsida</taxon>
        <taxon>Liliopsida</taxon>
        <taxon>Poales</taxon>
        <taxon>Poaceae</taxon>
        <taxon>BOP clade</taxon>
        <taxon>Oryzoideae</taxon>
        <taxon>Oryzeae</taxon>
        <taxon>Oryzinae</taxon>
        <taxon>Oryza</taxon>
        <taxon>Oryza sativa</taxon>
    </lineage>
</organism>
<gene>
    <name type="ordered locus">Os11g0230400</name>
    <name type="ordered locus">LOC_Os11g12410</name>
</gene>
<proteinExistence type="inferred from homology"/>
<protein>
    <recommendedName>
        <fullName>Putative serpin-Z6A</fullName>
    </recommendedName>
    <alternativeName>
        <fullName>OrysaZ6a</fullName>
    </alternativeName>
</protein>
<name>SPZ6A_ORYSJ</name>
<dbReference type="EMBL" id="AC119670">
    <property type="protein sequence ID" value="AAX94860.1"/>
    <property type="status" value="ALT_SEQ"/>
    <property type="molecule type" value="Genomic_DNA"/>
</dbReference>
<dbReference type="EMBL" id="DP000010">
    <property type="protein sequence ID" value="ABA92172.1"/>
    <property type="status" value="ALT_SEQ"/>
    <property type="molecule type" value="Genomic_DNA"/>
</dbReference>
<dbReference type="EMBL" id="AP014967">
    <property type="status" value="NOT_ANNOTATED_CDS"/>
    <property type="molecule type" value="Genomic_DNA"/>
</dbReference>
<dbReference type="SMR" id="Q53Q31"/>
<dbReference type="FunCoup" id="Q53Q31">
    <property type="interactions" value="283"/>
</dbReference>
<dbReference type="STRING" id="39947.Q53Q31"/>
<dbReference type="PaxDb" id="39947-Q53Q31"/>
<dbReference type="KEGG" id="osa:9268573"/>
<dbReference type="eggNOG" id="KOG2392">
    <property type="taxonomic scope" value="Eukaryota"/>
</dbReference>
<dbReference type="HOGENOM" id="CLU_023330_4_2_1"/>
<dbReference type="InParanoid" id="Q53Q31"/>
<dbReference type="OrthoDB" id="671595at2759"/>
<dbReference type="Proteomes" id="UP000000763">
    <property type="component" value="Chromosome 11"/>
</dbReference>
<dbReference type="Proteomes" id="UP000059680">
    <property type="component" value="Chromosome 11"/>
</dbReference>
<dbReference type="GO" id="GO:0005615">
    <property type="term" value="C:extracellular space"/>
    <property type="evidence" value="ECO:0000318"/>
    <property type="project" value="GO_Central"/>
</dbReference>
<dbReference type="GO" id="GO:0004867">
    <property type="term" value="F:serine-type endopeptidase inhibitor activity"/>
    <property type="evidence" value="ECO:0007669"/>
    <property type="project" value="UniProtKB-KW"/>
</dbReference>
<dbReference type="CDD" id="cd02043">
    <property type="entry name" value="serpinP_plants"/>
    <property type="match status" value="1"/>
</dbReference>
<dbReference type="FunFam" id="2.30.39.10:FF:000022">
    <property type="entry name" value="Os11g0230400 protein"/>
    <property type="match status" value="1"/>
</dbReference>
<dbReference type="FunFam" id="3.30.497.10:FF:000027">
    <property type="entry name" value="Putative serpin-Z6A"/>
    <property type="match status" value="1"/>
</dbReference>
<dbReference type="FunFam" id="2.10.310.10:FF:000001">
    <property type="entry name" value="Serpin family A member 1"/>
    <property type="match status" value="1"/>
</dbReference>
<dbReference type="Gene3D" id="6.20.40.10">
    <property type="match status" value="1"/>
</dbReference>
<dbReference type="Gene3D" id="2.30.39.10">
    <property type="entry name" value="Alpha-1-antitrypsin, domain 1"/>
    <property type="match status" value="1"/>
</dbReference>
<dbReference type="Gene3D" id="3.30.497.10">
    <property type="entry name" value="Antithrombin, subunit I, domain 2"/>
    <property type="match status" value="1"/>
</dbReference>
<dbReference type="Gene3D" id="2.10.310.10">
    <property type="entry name" value="Serpins superfamily"/>
    <property type="match status" value="1"/>
</dbReference>
<dbReference type="InterPro" id="IPR023796">
    <property type="entry name" value="Serpin_dom"/>
</dbReference>
<dbReference type="InterPro" id="IPR000215">
    <property type="entry name" value="Serpin_fam"/>
</dbReference>
<dbReference type="InterPro" id="IPR036186">
    <property type="entry name" value="Serpin_sf"/>
</dbReference>
<dbReference type="InterPro" id="IPR042178">
    <property type="entry name" value="Serpin_sf_1"/>
</dbReference>
<dbReference type="InterPro" id="IPR042185">
    <property type="entry name" value="Serpin_sf_2"/>
</dbReference>
<dbReference type="PANTHER" id="PTHR11461">
    <property type="entry name" value="SERINE PROTEASE INHIBITOR, SERPIN"/>
    <property type="match status" value="1"/>
</dbReference>
<dbReference type="PANTHER" id="PTHR11461:SF209">
    <property type="entry name" value="SERPIN-Z8-RELATED"/>
    <property type="match status" value="1"/>
</dbReference>
<dbReference type="Pfam" id="PF00079">
    <property type="entry name" value="Serpin"/>
    <property type="match status" value="1"/>
</dbReference>
<dbReference type="SMART" id="SM00093">
    <property type="entry name" value="SERPIN"/>
    <property type="match status" value="1"/>
</dbReference>
<dbReference type="SUPFAM" id="SSF56574">
    <property type="entry name" value="Serpins"/>
    <property type="match status" value="1"/>
</dbReference>
<keyword id="KW-0646">Protease inhibitor</keyword>
<keyword id="KW-1185">Reference proteome</keyword>
<keyword id="KW-0722">Serine protease inhibitor</keyword>
<feature type="chain" id="PRO_0000334557" description="Putative serpin-Z6A">
    <location>
        <begin position="1"/>
        <end position="393"/>
    </location>
</feature>
<feature type="region of interest" description="RCL">
    <location>
        <begin position="336"/>
        <end position="360"/>
    </location>
</feature>
<feature type="site" description="Reactive bond" evidence="2">
    <location>
        <begin position="350"/>
        <end position="351"/>
    </location>
</feature>
<sequence>MGISLRLAEQFSAEEDGGGGGGNLVFSPLSIYSALSVVTAGARGTTLTELLAALGAPSRDALAKNAAEIARALAGGTATGGPRVAHACGLWHERTRSLKLAFRDAAAASFNAATRAVDFLANPEEARKEINSWVAAATENLIDTILPPGSVSTDTGLVVTSAIYFNGTWQTPFRKQDTKKDKFHLLDGHGTVDADFMRTGEDQYIAAHDGFKVLKMPYAHDHAAPQPSPRYYSMYILLPDERDGLSSLEDRMAAAGGGGGGEGFLSEHMPVRRVEVGEFRIPRFKLSFSRSVVRALRGVGVNAVFDRAELPDMIEGEPLRVSDVLHKAVIEVNEEGTEAAAATAVLMEGAARYAPPPPPREDFVADHPFAFFVVEESSGAVLFAGHVVDPTKS</sequence>
<evidence type="ECO:0000250" key="1"/>
<evidence type="ECO:0000255" key="2"/>
<evidence type="ECO:0000305" key="3"/>
<comment type="function">
    <text evidence="1">Probable serine protease inhibitor.</text>
</comment>
<comment type="domain">
    <text evidence="1">The reactive center loop (RCL) extends out from the body of the protein and directs binding to the target protease. The protease cleaves the serpin at the reactive site within the RCL, establishing a covalent linkage between the carboxyl group of the serpin reactive site and the serine hydroxyl of the protease. The resulting inactive serpin-protease complex is highly stable (By similarity).</text>
</comment>
<comment type="similarity">
    <text evidence="3">Belongs to the serpin family.</text>
</comment>
<comment type="sequence caution" evidence="3">
    <conflict type="erroneous gene model prediction">
        <sequence resource="EMBL-CDS" id="AAX94860"/>
    </conflict>
</comment>
<comment type="sequence caution" evidence="3">
    <conflict type="erroneous gene model prediction">
        <sequence resource="EMBL-CDS" id="ABA92172"/>
    </conflict>
</comment>
<reference key="1">
    <citation type="journal article" date="2005" name="BMC Biol.">
        <title>The sequence of rice chromosomes 11 and 12, rich in disease resistance genes and recent gene duplications.</title>
        <authorList>
            <consortium name="The rice chromosomes 11 and 12 sequencing consortia"/>
        </authorList>
    </citation>
    <scope>NUCLEOTIDE SEQUENCE [LARGE SCALE GENOMIC DNA]</scope>
    <source>
        <strain>cv. Nipponbare</strain>
    </source>
</reference>
<reference key="2">
    <citation type="journal article" date="2005" name="Nature">
        <title>The map-based sequence of the rice genome.</title>
        <authorList>
            <consortium name="International rice genome sequencing project (IRGSP)"/>
        </authorList>
    </citation>
    <scope>NUCLEOTIDE SEQUENCE [LARGE SCALE GENOMIC DNA]</scope>
    <source>
        <strain>cv. Nipponbare</strain>
    </source>
</reference>
<reference key="3">
    <citation type="journal article" date="2013" name="Rice">
        <title>Improvement of the Oryza sativa Nipponbare reference genome using next generation sequence and optical map data.</title>
        <authorList>
            <person name="Kawahara Y."/>
            <person name="de la Bastide M."/>
            <person name="Hamilton J.P."/>
            <person name="Kanamori H."/>
            <person name="McCombie W.R."/>
            <person name="Ouyang S."/>
            <person name="Schwartz D.C."/>
            <person name="Tanaka T."/>
            <person name="Wu J."/>
            <person name="Zhou S."/>
            <person name="Childs K.L."/>
            <person name="Davidson R.M."/>
            <person name="Lin H."/>
            <person name="Quesada-Ocampo L."/>
            <person name="Vaillancourt B."/>
            <person name="Sakai H."/>
            <person name="Lee S.S."/>
            <person name="Kim J."/>
            <person name="Numa H."/>
            <person name="Itoh T."/>
            <person name="Buell C.R."/>
            <person name="Matsumoto T."/>
        </authorList>
    </citation>
    <scope>GENOME REANNOTATION</scope>
    <source>
        <strain>cv. Nipponbare</strain>
    </source>
</reference>
<reference key="4">
    <citation type="journal article" date="2008" name="Funct. Integr. Genomics">
        <title>Serpins in plants and green algae.</title>
        <authorList>
            <person name="Roberts T.H."/>
            <person name="Hejgaard J."/>
        </authorList>
    </citation>
    <scope>GENE FAMILY</scope>
    <scope>NOMENCLATURE</scope>
</reference>
<accession>Q53Q31</accession>